<feature type="chain" id="PRO_0000065141" description="F-box A protein 155">
    <location>
        <begin position="1"/>
        <end position="408"/>
    </location>
</feature>
<feature type="region of interest" description="Disordered" evidence="1">
    <location>
        <begin position="1"/>
        <end position="22"/>
    </location>
</feature>
<evidence type="ECO:0000256" key="1">
    <source>
        <dbReference type="SAM" id="MobiDB-lite"/>
    </source>
</evidence>
<evidence type="ECO:0000305" key="2"/>
<protein>
    <recommendedName>
        <fullName>F-box A protein 155</fullName>
    </recommendedName>
</protein>
<accession>P34294</accession>
<reference key="1">
    <citation type="journal article" date="1998" name="Science">
        <title>Genome sequence of the nematode C. elegans: a platform for investigating biology.</title>
        <authorList>
            <consortium name="The C. elegans sequencing consortium"/>
        </authorList>
    </citation>
    <scope>NUCLEOTIDE SEQUENCE [LARGE SCALE GENOMIC DNA]</scope>
    <source>
        <strain>Bristol N2</strain>
    </source>
</reference>
<keyword id="KW-1185">Reference proteome</keyword>
<organism>
    <name type="scientific">Caenorhabditis elegans</name>
    <dbReference type="NCBI Taxonomy" id="6239"/>
    <lineage>
        <taxon>Eukaryota</taxon>
        <taxon>Metazoa</taxon>
        <taxon>Ecdysozoa</taxon>
        <taxon>Nematoda</taxon>
        <taxon>Chromadorea</taxon>
        <taxon>Rhabditida</taxon>
        <taxon>Rhabditina</taxon>
        <taxon>Rhabditomorpha</taxon>
        <taxon>Rhabditoidea</taxon>
        <taxon>Rhabditidae</taxon>
        <taxon>Peloderinae</taxon>
        <taxon>Caenorhabditis</taxon>
    </lineage>
</organism>
<sequence length="408" mass="46244">MSDRGSDQSSSSSDSAQHIPPKAQTILTDQRSLRTCILLQHLQGKDPMEGYNLLCKSLGPKFMEYSHFNYWFMGLADETLTLDSADRFNASQVKQCIDLPDNHPAMASKTVLQTNRFSTVGDAHRSQSNIREGRNVKGIFLSFENSELAFDDDISFDNEQDDDGCIVEVEYKDDKKKTISKKKWSLKFAMKDLSAHLNGKKLVLDDFVVIMGGWRIAQDQEKWFEALQSILHSNGTVSAKCVSFVSFMTSYQTAQFLKHFESGFLERISIDADDASVEKIVCLEQYKQATSLSLGSGMFSEFFKHIDHFKSLKFCFFGKRLSKNHIELFRDNVIAKSVNLESCTFEHLDFSEKSFLTAFNAPKSATGSFVYKANKRSFTITSEGFAYHIKKNSSNLSTIKNSFPSDFF</sequence>
<dbReference type="EMBL" id="Z32679">
    <property type="protein sequence ID" value="CAA83594.2"/>
    <property type="molecule type" value="Genomic_DNA"/>
</dbReference>
<dbReference type="PIR" id="S43570">
    <property type="entry name" value="S43570"/>
</dbReference>
<dbReference type="RefSeq" id="NP_499220.2">
    <property type="nucleotide sequence ID" value="NM_066819.3"/>
</dbReference>
<dbReference type="SMR" id="P34294"/>
<dbReference type="PaxDb" id="6239-C05B5.6"/>
<dbReference type="EnsemblMetazoa" id="C05B5.6.1">
    <property type="protein sequence ID" value="C05B5.6.1"/>
    <property type="gene ID" value="WBGene00007323"/>
</dbReference>
<dbReference type="GeneID" id="176414"/>
<dbReference type="KEGG" id="cel:CELE_C05B5.6"/>
<dbReference type="AGR" id="WB:WBGene00007323"/>
<dbReference type="CTD" id="176414"/>
<dbReference type="WormBase" id="C05B5.6">
    <property type="protein sequence ID" value="CE33966"/>
    <property type="gene ID" value="WBGene00007323"/>
    <property type="gene designation" value="fbxa-155"/>
</dbReference>
<dbReference type="GeneTree" id="ENSGT00970000197130"/>
<dbReference type="HOGENOM" id="CLU_030831_3_2_1"/>
<dbReference type="InParanoid" id="P34294"/>
<dbReference type="OrthoDB" id="5910993at2759"/>
<dbReference type="PhylomeDB" id="P34294"/>
<dbReference type="PRO" id="PR:P34294"/>
<dbReference type="Proteomes" id="UP000001940">
    <property type="component" value="Chromosome III"/>
</dbReference>
<dbReference type="Bgee" id="WBGene00007323">
    <property type="expression patterns" value="Expressed in larva and 1 other cell type or tissue"/>
</dbReference>
<dbReference type="InterPro" id="IPR002900">
    <property type="entry name" value="DUF38/FTH_CAE_spp"/>
</dbReference>
<dbReference type="InterPro" id="IPR041426">
    <property type="entry name" value="Mos1_HTH"/>
</dbReference>
<dbReference type="Pfam" id="PF01827">
    <property type="entry name" value="FTH"/>
    <property type="match status" value="1"/>
</dbReference>
<dbReference type="Pfam" id="PF17906">
    <property type="entry name" value="HTH_48"/>
    <property type="match status" value="1"/>
</dbReference>
<comment type="similarity">
    <text evidence="2">Belongs to the FTH family.</text>
</comment>
<gene>
    <name type="primary">fbxa-155</name>
    <name type="ORF">C05B5.6</name>
</gene>
<name>FB155_CAEEL</name>
<proteinExistence type="inferred from homology"/>